<accession>B4TZF4</accession>
<keyword id="KW-0175">Coiled coil</keyword>
<keyword id="KW-0963">Cytoplasm</keyword>
<keyword id="KW-0346">Stress response</keyword>
<protein>
    <recommendedName>
        <fullName evidence="1">Anti-adapter protein IraP</fullName>
    </recommendedName>
</protein>
<name>IRAP_SALSV</name>
<gene>
    <name evidence="1" type="primary">iraP</name>
    <name type="ordered locus">SeSA_A0437</name>
</gene>
<comment type="function">
    <text evidence="1">Inhibits RpoS proteolysis by regulating RssB activity, thereby increasing the stability of the sigma stress factor RpoS especially during phosphate and magnesium starvation, but also in stationary phase and during nitrogen starvation. Its effect on RpoS stability is due to its interaction with RssB, which probably blocks the interaction of RssB with RpoS, and the consequent delivery of the RssB-RpoS complex to the ClpXP protein degradation pathway.</text>
</comment>
<comment type="subunit">
    <text evidence="1">Interacts with RssB.</text>
</comment>
<comment type="subcellular location">
    <subcellularLocation>
        <location evidence="1">Cytoplasm</location>
    </subcellularLocation>
</comment>
<comment type="similarity">
    <text evidence="1">Belongs to the IraP family.</text>
</comment>
<feature type="chain" id="PRO_1000138495" description="Anti-adapter protein IraP">
    <location>
        <begin position="1"/>
        <end position="86"/>
    </location>
</feature>
<feature type="coiled-coil region" evidence="1">
    <location>
        <begin position="1"/>
        <end position="36"/>
    </location>
</feature>
<proteinExistence type="inferred from homology"/>
<dbReference type="EMBL" id="CP001127">
    <property type="protein sequence ID" value="ACF89842.1"/>
    <property type="molecule type" value="Genomic_DNA"/>
</dbReference>
<dbReference type="RefSeq" id="WP_001518423.1">
    <property type="nucleotide sequence ID" value="NC_011094.1"/>
</dbReference>
<dbReference type="SMR" id="B4TZF4"/>
<dbReference type="KEGG" id="sew:SeSA_A0437"/>
<dbReference type="HOGENOM" id="CLU_169517_0_0_6"/>
<dbReference type="Proteomes" id="UP000001865">
    <property type="component" value="Chromosome"/>
</dbReference>
<dbReference type="GO" id="GO:0005737">
    <property type="term" value="C:cytoplasm"/>
    <property type="evidence" value="ECO:0007669"/>
    <property type="project" value="UniProtKB-SubCell"/>
</dbReference>
<dbReference type="GO" id="GO:0009267">
    <property type="term" value="P:cellular response to starvation"/>
    <property type="evidence" value="ECO:0007669"/>
    <property type="project" value="UniProtKB-UniRule"/>
</dbReference>
<dbReference type="HAMAP" id="MF_01198">
    <property type="entry name" value="Anti_adapt_IraP"/>
    <property type="match status" value="1"/>
</dbReference>
<dbReference type="InterPro" id="IPR019732">
    <property type="entry name" value="SigmaS_Anti-adapt_IraP"/>
</dbReference>
<dbReference type="NCBIfam" id="NF007598">
    <property type="entry name" value="PRK10244.1"/>
    <property type="match status" value="1"/>
</dbReference>
<dbReference type="Pfam" id="PF10796">
    <property type="entry name" value="Anti-adapt_IraP"/>
    <property type="match status" value="1"/>
</dbReference>
<reference key="1">
    <citation type="journal article" date="2011" name="J. Bacteriol.">
        <title>Comparative genomics of 28 Salmonella enterica isolates: evidence for CRISPR-mediated adaptive sublineage evolution.</title>
        <authorList>
            <person name="Fricke W.F."/>
            <person name="Mammel M.K."/>
            <person name="McDermott P.F."/>
            <person name="Tartera C."/>
            <person name="White D.G."/>
            <person name="Leclerc J.E."/>
            <person name="Ravel J."/>
            <person name="Cebula T.A."/>
        </authorList>
    </citation>
    <scope>NUCLEOTIDE SEQUENCE [LARGE SCALE GENOMIC DNA]</scope>
    <source>
        <strain>CVM19633</strain>
    </source>
</reference>
<evidence type="ECO:0000255" key="1">
    <source>
        <dbReference type="HAMAP-Rule" id="MF_01198"/>
    </source>
</evidence>
<sequence>MKNLIAELLLKLAQKEEESKELVAQVEALEIIVTAMLRNMAQNEQEMLIRQVEGALEGVKPDASVPDHDTELLRQYVKKLLRHPRH</sequence>
<organism>
    <name type="scientific">Salmonella schwarzengrund (strain CVM19633)</name>
    <dbReference type="NCBI Taxonomy" id="439843"/>
    <lineage>
        <taxon>Bacteria</taxon>
        <taxon>Pseudomonadati</taxon>
        <taxon>Pseudomonadota</taxon>
        <taxon>Gammaproteobacteria</taxon>
        <taxon>Enterobacterales</taxon>
        <taxon>Enterobacteriaceae</taxon>
        <taxon>Salmonella</taxon>
    </lineage>
</organism>